<name>NEP_I79A7</name>
<gene>
    <name evidence="1" type="primary">NS</name>
</gene>
<dbReference type="EMBL" id="CY005675">
    <property type="protein sequence ID" value="ABB20367.1"/>
    <property type="molecule type" value="Genomic_RNA"/>
</dbReference>
<dbReference type="SMR" id="Q20PL9"/>
<dbReference type="Proteomes" id="UP000008575">
    <property type="component" value="Genome"/>
</dbReference>
<dbReference type="GO" id="GO:0042025">
    <property type="term" value="C:host cell nucleus"/>
    <property type="evidence" value="ECO:0007669"/>
    <property type="project" value="UniProtKB-SubCell"/>
</dbReference>
<dbReference type="GO" id="GO:0044423">
    <property type="term" value="C:virion component"/>
    <property type="evidence" value="ECO:0007669"/>
    <property type="project" value="UniProtKB-UniRule"/>
</dbReference>
<dbReference type="GO" id="GO:0039675">
    <property type="term" value="P:exit of virus from host cell nucleus through nuclear pore"/>
    <property type="evidence" value="ECO:0007669"/>
    <property type="project" value="UniProtKB-UniRule"/>
</dbReference>
<dbReference type="Gene3D" id="1.10.287.230">
    <property type="match status" value="1"/>
</dbReference>
<dbReference type="Gene3D" id="1.10.287.10">
    <property type="entry name" value="S15/NS1, RNA-binding"/>
    <property type="match status" value="1"/>
</dbReference>
<dbReference type="HAMAP" id="MF_04067">
    <property type="entry name" value="INFV_NEP"/>
    <property type="match status" value="1"/>
</dbReference>
<dbReference type="InterPro" id="IPR000968">
    <property type="entry name" value="Flu_NS2"/>
</dbReference>
<dbReference type="Pfam" id="PF00601">
    <property type="entry name" value="Flu_NS2"/>
    <property type="match status" value="1"/>
</dbReference>
<dbReference type="SUPFAM" id="SSF101156">
    <property type="entry name" value="Nonstructural protein ns2, Nep, M1-binding domain"/>
    <property type="match status" value="1"/>
</dbReference>
<reference key="1">
    <citation type="journal article" date="2006" name="Science">
        <title>Large-scale sequence analysis of avian influenza isolates.</title>
        <authorList>
            <person name="Obenauer J.C."/>
            <person name="Denson J."/>
            <person name="Mehta P.K."/>
            <person name="Su X."/>
            <person name="Mukatira S."/>
            <person name="Finkelstein D.B."/>
            <person name="Xu X."/>
            <person name="Wang J."/>
            <person name="Ma J."/>
            <person name="Fan Y."/>
            <person name="Rakestraw K.M."/>
            <person name="Webster R.G."/>
            <person name="Hoffmann E."/>
            <person name="Krauss S."/>
            <person name="Zheng J."/>
            <person name="Zhang Z."/>
            <person name="Naeve C.W."/>
        </authorList>
    </citation>
    <scope>NUCLEOTIDE SEQUENCE [GENOMIC RNA]</scope>
</reference>
<proteinExistence type="inferred from homology"/>
<evidence type="ECO:0000255" key="1">
    <source>
        <dbReference type="HAMAP-Rule" id="MF_04067"/>
    </source>
</evidence>
<feature type="chain" id="PRO_0000324220" description="Nuclear export protein">
    <location>
        <begin position="1"/>
        <end position="121"/>
    </location>
</feature>
<feature type="short sequence motif" description="Nuclear export signal" evidence="1">
    <location>
        <begin position="12"/>
        <end position="21"/>
    </location>
</feature>
<feature type="short sequence motif" description="Nuclear export signal" evidence="1">
    <location>
        <begin position="85"/>
        <end position="94"/>
    </location>
</feature>
<organism>
    <name type="scientific">Influenza A virus (strain A/Grey teal/Australia/2/1979 H4N4)</name>
    <dbReference type="NCBI Taxonomy" id="402464"/>
    <lineage>
        <taxon>Viruses</taxon>
        <taxon>Riboviria</taxon>
        <taxon>Orthornavirae</taxon>
        <taxon>Negarnaviricota</taxon>
        <taxon>Polyploviricotina</taxon>
        <taxon>Insthoviricetes</taxon>
        <taxon>Articulavirales</taxon>
        <taxon>Orthomyxoviridae</taxon>
        <taxon>Alphainfluenzavirus</taxon>
        <taxon>Alphainfluenzavirus influenzae</taxon>
        <taxon>Influenza A virus</taxon>
    </lineage>
</organism>
<comment type="function">
    <text evidence="1">Mediates the nuclear export of encapsidated genomic RNAs (ribonucleoproteins, RNPs). Acts as an adapter between viral RNPs complexes and the nuclear export machinery of the cell. Possesses no intrinsic RNA-binding activity, but includes a C-terminal M1-binding domain. This domain is believed to allow recognition of RNPs bound to the protein M1. Since protein M1 is not available in large quantities before late stages of infection, such an indirect recognition mechanism probably ensures that genomic RNPs are not exported from the host nucleus until sufficient quantities of viral mRNA and progeny genomic RNA have been synthesized. Furthermore, the RNPs enter the host cytoplasm only when associated with the M1 protein that is necessary to guide them to the plasma membrane. May down-regulate viral RNA synthesis when overproduced.</text>
</comment>
<comment type="subunit">
    <text evidence="1">Interacts with protein M1. May interact with host nucleoporin RAB/HRB and exportin XPO1/CRM1.</text>
</comment>
<comment type="subcellular location">
    <subcellularLocation>
        <location evidence="1">Virion</location>
    </subcellularLocation>
    <subcellularLocation>
        <location evidence="1">Host nucleus</location>
    </subcellularLocation>
</comment>
<comment type="alternative products">
    <event type="alternative splicing"/>
    <isoform>
        <id>Q20PL9-1</id>
        <name>NEP</name>
        <name>NS2</name>
        <sequence type="displayed"/>
    </isoform>
    <isoform>
        <id>Q20PL8-1</id>
        <name>NS1</name>
        <sequence type="external"/>
    </isoform>
</comment>
<comment type="similarity">
    <text evidence="1">Belongs to the influenza viruses NEP family.</text>
</comment>
<organismHost>
    <name type="scientific">Aves</name>
    <dbReference type="NCBI Taxonomy" id="8782"/>
</organismHost>
<protein>
    <recommendedName>
        <fullName evidence="1">Nuclear export protein</fullName>
        <shortName evidence="1">NEP</shortName>
    </recommendedName>
    <alternativeName>
        <fullName evidence="1">Non-structural protein 2</fullName>
        <shortName evidence="1">NS2</shortName>
    </alternativeName>
</protein>
<accession>Q20PL9</accession>
<sequence length="121" mass="14378">MDSNTVSSFQDILMRMSKMQLGSSSEDLNGMIIQFESLKLYRDSLGEAVMRMGDLHSLQNRNGKWREQLSQKFEEIRWLIEEVRHRLKITENSFEQITFMQALQLLLEVEQEIRTFSFQLI</sequence>
<keyword id="KW-0025">Alternative splicing</keyword>
<keyword id="KW-1048">Host nucleus</keyword>
<keyword id="KW-0945">Host-virus interaction</keyword>
<keyword id="KW-0813">Transport</keyword>
<keyword id="KW-0946">Virion</keyword>